<organism>
    <name type="scientific">Cyanidioschyzon merolae (strain NIES-3377 / 10D)</name>
    <name type="common">Unicellular red alga</name>
    <dbReference type="NCBI Taxonomy" id="280699"/>
    <lineage>
        <taxon>Eukaryota</taxon>
        <taxon>Rhodophyta</taxon>
        <taxon>Bangiophyceae</taxon>
        <taxon>Cyanidiales</taxon>
        <taxon>Cyanidiaceae</taxon>
        <taxon>Cyanidioschyzon</taxon>
    </lineage>
</organism>
<accession>Q85FQ8</accession>
<keyword id="KW-0066">ATP synthesis</keyword>
<keyword id="KW-0067">ATP-binding</keyword>
<keyword id="KW-0139">CF(1)</keyword>
<keyword id="KW-0150">Chloroplast</keyword>
<keyword id="KW-0375">Hydrogen ion transport</keyword>
<keyword id="KW-0406">Ion transport</keyword>
<keyword id="KW-0472">Membrane</keyword>
<keyword id="KW-0547">Nucleotide-binding</keyword>
<keyword id="KW-0934">Plastid</keyword>
<keyword id="KW-1185">Reference proteome</keyword>
<keyword id="KW-0793">Thylakoid</keyword>
<keyword id="KW-1278">Translocase</keyword>
<keyword id="KW-0813">Transport</keyword>
<evidence type="ECO:0000255" key="1">
    <source>
        <dbReference type="HAMAP-Rule" id="MF_01346"/>
    </source>
</evidence>
<protein>
    <recommendedName>
        <fullName evidence="1">ATP synthase subunit alpha, chloroplastic</fullName>
        <ecNumber evidence="1">7.1.2.2</ecNumber>
    </recommendedName>
    <alternativeName>
        <fullName evidence="1">ATP synthase F1 sector subunit alpha</fullName>
    </alternativeName>
    <alternativeName>
        <fullName evidence="1">F-ATPase subunit alpha</fullName>
    </alternativeName>
</protein>
<feature type="chain" id="PRO_0000238419" description="ATP synthase subunit alpha, chloroplastic">
    <location>
        <begin position="1"/>
        <end position="495"/>
    </location>
</feature>
<feature type="binding site" evidence="1">
    <location>
        <begin position="170"/>
        <end position="177"/>
    </location>
    <ligand>
        <name>ATP</name>
        <dbReference type="ChEBI" id="CHEBI:30616"/>
    </ligand>
</feature>
<feature type="site" description="Required for activity" evidence="1">
    <location>
        <position position="363"/>
    </location>
</feature>
<name>ATPA_CYAM1</name>
<geneLocation type="chloroplast"/>
<gene>
    <name evidence="1" type="primary">atpA</name>
</gene>
<proteinExistence type="inferred from homology"/>
<sequence>MVNLRPDEISSMIRQQIEQFSQQVQFNHVGTVMQVGDGIARVYGLNDVMAGELLEFADGTIGIALNLESDHVGAVLMGDGRNILEGSEVKSSGQIAQVPVGEELLGRVVNALVQPIDGKGGIETKQTRLIESPAPGIVARQSVCEPLQTGITAIDAMIPIGRGQRELIIGDRQTGKTAIALDTIINQKNEDVICVYVAIGQKASSVAAAVNLLATKGAMDYTIVVTANADDAASLQYLAPYTGAAIAEHFMYQGKATLVIYDDLTKQAQAYRQMSLLLRRPPGREAYPGDVFYLHSRLLERAAKLNKELGGGSMTALPIVETQAGDVSAYIPTNVISITDGQIFLSSDLFNAGIRPAINVGISVSRVGSAAQIQSMKKVAGRLKLELAQFDELQAFSQFASDLDKATQMQLARGQRLREVLKQSQASPIPIEEQIAMIYAGVNGWLDKLALEEVQPFLSRVRSELRTSNYPSAVKSKWSEEVEQMLKDVLSKHAQ</sequence>
<dbReference type="EC" id="7.1.2.2" evidence="1"/>
<dbReference type="EMBL" id="AB002583">
    <property type="protein sequence ID" value="BAC76287.1"/>
    <property type="molecule type" value="Genomic_DNA"/>
</dbReference>
<dbReference type="RefSeq" id="NP_849125.1">
    <property type="nucleotide sequence ID" value="NC_004799.1"/>
</dbReference>
<dbReference type="SMR" id="Q85FQ8"/>
<dbReference type="STRING" id="280699.Q85FQ8"/>
<dbReference type="EnsemblPlants" id="CMV225CT">
    <property type="protein sequence ID" value="CMV225CT"/>
    <property type="gene ID" value="CMV225C"/>
</dbReference>
<dbReference type="GeneID" id="844865"/>
<dbReference type="Gramene" id="CMV225CT">
    <property type="protein sequence ID" value="CMV225CT"/>
    <property type="gene ID" value="CMV225C"/>
</dbReference>
<dbReference type="KEGG" id="cme:CymeCp193"/>
<dbReference type="eggNOG" id="KOG1353">
    <property type="taxonomic scope" value="Eukaryota"/>
</dbReference>
<dbReference type="HOGENOM" id="CLU_010091_2_1_1"/>
<dbReference type="Proteomes" id="UP000007014">
    <property type="component" value="Chloroplast"/>
</dbReference>
<dbReference type="GO" id="GO:0009535">
    <property type="term" value="C:chloroplast thylakoid membrane"/>
    <property type="evidence" value="ECO:0007669"/>
    <property type="project" value="UniProtKB-SubCell"/>
</dbReference>
<dbReference type="GO" id="GO:0045259">
    <property type="term" value="C:proton-transporting ATP synthase complex"/>
    <property type="evidence" value="ECO:0007669"/>
    <property type="project" value="UniProtKB-KW"/>
</dbReference>
<dbReference type="GO" id="GO:0043531">
    <property type="term" value="F:ADP binding"/>
    <property type="evidence" value="ECO:0007669"/>
    <property type="project" value="TreeGrafter"/>
</dbReference>
<dbReference type="GO" id="GO:0005524">
    <property type="term" value="F:ATP binding"/>
    <property type="evidence" value="ECO:0007669"/>
    <property type="project" value="UniProtKB-UniRule"/>
</dbReference>
<dbReference type="GO" id="GO:0046933">
    <property type="term" value="F:proton-transporting ATP synthase activity, rotational mechanism"/>
    <property type="evidence" value="ECO:0007669"/>
    <property type="project" value="UniProtKB-UniRule"/>
</dbReference>
<dbReference type="CDD" id="cd18113">
    <property type="entry name" value="ATP-synt_F1_alpha_C"/>
    <property type="match status" value="1"/>
</dbReference>
<dbReference type="CDD" id="cd18116">
    <property type="entry name" value="ATP-synt_F1_alpha_N"/>
    <property type="match status" value="1"/>
</dbReference>
<dbReference type="CDD" id="cd01132">
    <property type="entry name" value="F1-ATPase_alpha_CD"/>
    <property type="match status" value="1"/>
</dbReference>
<dbReference type="FunFam" id="1.20.150.20:FF:000001">
    <property type="entry name" value="ATP synthase subunit alpha"/>
    <property type="match status" value="1"/>
</dbReference>
<dbReference type="FunFam" id="2.40.30.20:FF:000001">
    <property type="entry name" value="ATP synthase subunit alpha"/>
    <property type="match status" value="1"/>
</dbReference>
<dbReference type="FunFam" id="3.40.50.300:FF:000002">
    <property type="entry name" value="ATP synthase subunit alpha"/>
    <property type="match status" value="1"/>
</dbReference>
<dbReference type="Gene3D" id="2.40.30.20">
    <property type="match status" value="1"/>
</dbReference>
<dbReference type="Gene3D" id="1.20.150.20">
    <property type="entry name" value="ATP synthase alpha/beta chain, C-terminal domain"/>
    <property type="match status" value="1"/>
</dbReference>
<dbReference type="Gene3D" id="3.40.50.300">
    <property type="entry name" value="P-loop containing nucleotide triphosphate hydrolases"/>
    <property type="match status" value="1"/>
</dbReference>
<dbReference type="HAMAP" id="MF_01346">
    <property type="entry name" value="ATP_synth_alpha_bact"/>
    <property type="match status" value="1"/>
</dbReference>
<dbReference type="InterPro" id="IPR023366">
    <property type="entry name" value="ATP_synth_asu-like_sf"/>
</dbReference>
<dbReference type="InterPro" id="IPR000793">
    <property type="entry name" value="ATP_synth_asu_C"/>
</dbReference>
<dbReference type="InterPro" id="IPR038376">
    <property type="entry name" value="ATP_synth_asu_C_sf"/>
</dbReference>
<dbReference type="InterPro" id="IPR033732">
    <property type="entry name" value="ATP_synth_F1_a_nt-bd_dom"/>
</dbReference>
<dbReference type="InterPro" id="IPR005294">
    <property type="entry name" value="ATP_synth_F1_asu"/>
</dbReference>
<dbReference type="InterPro" id="IPR020003">
    <property type="entry name" value="ATPase_a/bsu_AS"/>
</dbReference>
<dbReference type="InterPro" id="IPR004100">
    <property type="entry name" value="ATPase_F1/V1/A1_a/bsu_N"/>
</dbReference>
<dbReference type="InterPro" id="IPR036121">
    <property type="entry name" value="ATPase_F1/V1/A1_a/bsu_N_sf"/>
</dbReference>
<dbReference type="InterPro" id="IPR000194">
    <property type="entry name" value="ATPase_F1/V1/A1_a/bsu_nucl-bd"/>
</dbReference>
<dbReference type="InterPro" id="IPR027417">
    <property type="entry name" value="P-loop_NTPase"/>
</dbReference>
<dbReference type="NCBIfam" id="TIGR00962">
    <property type="entry name" value="atpA"/>
    <property type="match status" value="1"/>
</dbReference>
<dbReference type="NCBIfam" id="NF009884">
    <property type="entry name" value="PRK13343.1"/>
    <property type="match status" value="1"/>
</dbReference>
<dbReference type="PANTHER" id="PTHR48082">
    <property type="entry name" value="ATP SYNTHASE SUBUNIT ALPHA, MITOCHONDRIAL"/>
    <property type="match status" value="1"/>
</dbReference>
<dbReference type="PANTHER" id="PTHR48082:SF2">
    <property type="entry name" value="ATP SYNTHASE SUBUNIT ALPHA, MITOCHONDRIAL"/>
    <property type="match status" value="1"/>
</dbReference>
<dbReference type="Pfam" id="PF00006">
    <property type="entry name" value="ATP-synt_ab"/>
    <property type="match status" value="1"/>
</dbReference>
<dbReference type="Pfam" id="PF00306">
    <property type="entry name" value="ATP-synt_ab_C"/>
    <property type="match status" value="1"/>
</dbReference>
<dbReference type="Pfam" id="PF02874">
    <property type="entry name" value="ATP-synt_ab_N"/>
    <property type="match status" value="1"/>
</dbReference>
<dbReference type="PIRSF" id="PIRSF039088">
    <property type="entry name" value="F_ATPase_subunit_alpha"/>
    <property type="match status" value="1"/>
</dbReference>
<dbReference type="SUPFAM" id="SSF47917">
    <property type="entry name" value="C-terminal domain of alpha and beta subunits of F1 ATP synthase"/>
    <property type="match status" value="1"/>
</dbReference>
<dbReference type="SUPFAM" id="SSF50615">
    <property type="entry name" value="N-terminal domain of alpha and beta subunits of F1 ATP synthase"/>
    <property type="match status" value="1"/>
</dbReference>
<dbReference type="SUPFAM" id="SSF52540">
    <property type="entry name" value="P-loop containing nucleoside triphosphate hydrolases"/>
    <property type="match status" value="1"/>
</dbReference>
<dbReference type="PROSITE" id="PS00152">
    <property type="entry name" value="ATPASE_ALPHA_BETA"/>
    <property type="match status" value="1"/>
</dbReference>
<comment type="function">
    <text evidence="1">Produces ATP from ADP in the presence of a proton gradient across the membrane. The alpha chain is a regulatory subunit.</text>
</comment>
<comment type="catalytic activity">
    <reaction evidence="1">
        <text>ATP + H2O + 4 H(+)(in) = ADP + phosphate + 5 H(+)(out)</text>
        <dbReference type="Rhea" id="RHEA:57720"/>
        <dbReference type="ChEBI" id="CHEBI:15377"/>
        <dbReference type="ChEBI" id="CHEBI:15378"/>
        <dbReference type="ChEBI" id="CHEBI:30616"/>
        <dbReference type="ChEBI" id="CHEBI:43474"/>
        <dbReference type="ChEBI" id="CHEBI:456216"/>
        <dbReference type="EC" id="7.1.2.2"/>
    </reaction>
</comment>
<comment type="subunit">
    <text evidence="1">F-type ATPases have 2 components, CF(1) - the catalytic core - and CF(0) - the membrane proton channel. CF(1) has five subunits: alpha(3), beta(3), gamma(1), delta(1), epsilon(1). CF(0) has four main subunits: a, b, b' and c.</text>
</comment>
<comment type="subcellular location">
    <subcellularLocation>
        <location evidence="1">Plastid</location>
        <location evidence="1">Chloroplast thylakoid membrane</location>
        <topology evidence="1">Peripheral membrane protein</topology>
    </subcellularLocation>
</comment>
<comment type="similarity">
    <text evidence="1">Belongs to the ATPase alpha/beta chains family.</text>
</comment>
<reference key="1">
    <citation type="journal article" date="2003" name="DNA Res.">
        <title>Complete sequence and analysis of the plastid genome of the unicellular red alga Cyanidioschyzon merolae.</title>
        <authorList>
            <person name="Ohta N."/>
            <person name="Matsuzaki M."/>
            <person name="Misumi O."/>
            <person name="Miyagishima S.-Y."/>
            <person name="Nozaki H."/>
            <person name="Tanaka K."/>
            <person name="Shin-i T."/>
            <person name="Kohara Y."/>
            <person name="Kuroiwa T."/>
        </authorList>
    </citation>
    <scope>NUCLEOTIDE SEQUENCE [LARGE SCALE GENOMIC DNA]</scope>
    <source>
        <strain>NIES-3377 / 10D</strain>
    </source>
</reference>